<comment type="catalytic activity">
    <reaction>
        <text>aldehydo-D-ribose 5-phosphate = D-ribulose 5-phosphate</text>
        <dbReference type="Rhea" id="RHEA:14657"/>
        <dbReference type="ChEBI" id="CHEBI:58121"/>
        <dbReference type="ChEBI" id="CHEBI:58273"/>
        <dbReference type="EC" id="5.3.1.6"/>
    </reaction>
</comment>
<comment type="pathway">
    <text>Carbohydrate degradation; pentose phosphate pathway; D-ribose 5-phosphate from D-ribulose 5-phosphate (non-oxidative stage): step 1/1.</text>
</comment>
<comment type="subcellular location">
    <subcellularLocation>
        <location evidence="1">Cytoplasm</location>
    </subcellularLocation>
</comment>
<comment type="similarity">
    <text evidence="1">Belongs to the ribose 5-phosphate isomerase family.</text>
</comment>
<proteinExistence type="inferred from homology"/>
<feature type="chain" id="PRO_0000410270" description="Ribose-5-phosphate isomerase">
    <location>
        <begin position="1"/>
        <end position="302"/>
    </location>
</feature>
<evidence type="ECO:0000305" key="1"/>
<gene>
    <name type="primary">RKI1</name>
    <name type="ordered locus">CNBD1280</name>
</gene>
<keyword id="KW-0963">Cytoplasm</keyword>
<keyword id="KW-0413">Isomerase</keyword>
<sequence length="302" mass="32100">MPSPAVDLLKQKTASLPNAPISVVAANTFVPPTQPVTAGNQLPTSVPLPVLPAVEAAKRLAAYAAVDRHIAHEHKVIGIGSGSTVPYVVDRILAQGFEANKDRVFLPTGFQSKELIVKAGLTLGDVDQYARIDVTIDGADEVDNELNSIKGGGACQLREKVLAEAADTWIIVADYRKNSEVLGTSWTKGIPIEVVPFAYAKVLTNLAHMGSPHVLPNGQPGLSLRMGKMKAGPVVSDNGNFIIDAPFAEELMRQPEELLHKIKMLTGVVEVGLFCGMAKAAYFGNEDGSVTIRSDDGTISQL</sequence>
<dbReference type="EC" id="5.3.1.6"/>
<dbReference type="EMBL" id="AAEY01000019">
    <property type="protein sequence ID" value="EAL21433.1"/>
    <property type="molecule type" value="Genomic_DNA"/>
</dbReference>
<dbReference type="RefSeq" id="XP_776080.1">
    <property type="nucleotide sequence ID" value="XM_770987.1"/>
</dbReference>
<dbReference type="SMR" id="P0CR19"/>
<dbReference type="EnsemblFungi" id="AAW43129">
    <property type="protein sequence ID" value="AAW43129"/>
    <property type="gene ID" value="CND05060"/>
</dbReference>
<dbReference type="GeneID" id="4935517"/>
<dbReference type="KEGG" id="cnb:CNBD1280"/>
<dbReference type="VEuPathDB" id="FungiDB:CNBD1280"/>
<dbReference type="HOGENOM" id="CLU_056590_0_1_1"/>
<dbReference type="OrthoDB" id="4338at5206"/>
<dbReference type="UniPathway" id="UPA00115">
    <property type="reaction ID" value="UER00412"/>
</dbReference>
<dbReference type="GO" id="GO:0005737">
    <property type="term" value="C:cytoplasm"/>
    <property type="evidence" value="ECO:0007669"/>
    <property type="project" value="UniProtKB-SubCell"/>
</dbReference>
<dbReference type="GO" id="GO:0004751">
    <property type="term" value="F:ribose-5-phosphate isomerase activity"/>
    <property type="evidence" value="ECO:0007669"/>
    <property type="project" value="UniProtKB-EC"/>
</dbReference>
<dbReference type="GO" id="GO:0006014">
    <property type="term" value="P:D-ribose metabolic process"/>
    <property type="evidence" value="ECO:0007669"/>
    <property type="project" value="TreeGrafter"/>
</dbReference>
<dbReference type="GO" id="GO:0009052">
    <property type="term" value="P:pentose-phosphate shunt, non-oxidative branch"/>
    <property type="evidence" value="ECO:0007669"/>
    <property type="project" value="InterPro"/>
</dbReference>
<dbReference type="CDD" id="cd01398">
    <property type="entry name" value="RPI_A"/>
    <property type="match status" value="1"/>
</dbReference>
<dbReference type="FunFam" id="3.40.50.1360:FF:000014">
    <property type="entry name" value="Ribose 5-phosphate isomerase"/>
    <property type="match status" value="1"/>
</dbReference>
<dbReference type="FunFam" id="3.30.70.260:FF:000053">
    <property type="entry name" value="Ribose-5-phosphate isomerase, putative"/>
    <property type="match status" value="1"/>
</dbReference>
<dbReference type="Gene3D" id="3.30.70.260">
    <property type="match status" value="1"/>
</dbReference>
<dbReference type="Gene3D" id="3.40.50.1360">
    <property type="match status" value="1"/>
</dbReference>
<dbReference type="InterPro" id="IPR037171">
    <property type="entry name" value="NagB/RpiA_transferase-like"/>
</dbReference>
<dbReference type="InterPro" id="IPR004788">
    <property type="entry name" value="Ribose5P_isomerase_type_A"/>
</dbReference>
<dbReference type="NCBIfam" id="TIGR00021">
    <property type="entry name" value="rpiA"/>
    <property type="match status" value="1"/>
</dbReference>
<dbReference type="PANTHER" id="PTHR11934">
    <property type="entry name" value="RIBOSE-5-PHOSPHATE ISOMERASE"/>
    <property type="match status" value="1"/>
</dbReference>
<dbReference type="PANTHER" id="PTHR11934:SF0">
    <property type="entry name" value="RIBOSE-5-PHOSPHATE ISOMERASE"/>
    <property type="match status" value="1"/>
</dbReference>
<dbReference type="Pfam" id="PF06026">
    <property type="entry name" value="Rib_5-P_isom_A"/>
    <property type="match status" value="1"/>
</dbReference>
<dbReference type="SUPFAM" id="SSF75445">
    <property type="entry name" value="D-ribose-5-phosphate isomerase (RpiA), lid domain"/>
    <property type="match status" value="1"/>
</dbReference>
<dbReference type="SUPFAM" id="SSF100950">
    <property type="entry name" value="NagB/RpiA/CoA transferase-like"/>
    <property type="match status" value="1"/>
</dbReference>
<name>RPIA_CRYNB</name>
<reference key="1">
    <citation type="journal article" date="2005" name="Science">
        <title>The genome of the basidiomycetous yeast and human pathogen Cryptococcus neoformans.</title>
        <authorList>
            <person name="Loftus B.J."/>
            <person name="Fung E."/>
            <person name="Roncaglia P."/>
            <person name="Rowley D."/>
            <person name="Amedeo P."/>
            <person name="Bruno D."/>
            <person name="Vamathevan J."/>
            <person name="Miranda M."/>
            <person name="Anderson I.J."/>
            <person name="Fraser J.A."/>
            <person name="Allen J.E."/>
            <person name="Bosdet I.E."/>
            <person name="Brent M.R."/>
            <person name="Chiu R."/>
            <person name="Doering T.L."/>
            <person name="Donlin M.J."/>
            <person name="D'Souza C.A."/>
            <person name="Fox D.S."/>
            <person name="Grinberg V."/>
            <person name="Fu J."/>
            <person name="Fukushima M."/>
            <person name="Haas B.J."/>
            <person name="Huang J.C."/>
            <person name="Janbon G."/>
            <person name="Jones S.J.M."/>
            <person name="Koo H.L."/>
            <person name="Krzywinski M.I."/>
            <person name="Kwon-Chung K.J."/>
            <person name="Lengeler K.B."/>
            <person name="Maiti R."/>
            <person name="Marra M.A."/>
            <person name="Marra R.E."/>
            <person name="Mathewson C.A."/>
            <person name="Mitchell T.G."/>
            <person name="Pertea M."/>
            <person name="Riggs F.R."/>
            <person name="Salzberg S.L."/>
            <person name="Schein J.E."/>
            <person name="Shvartsbeyn A."/>
            <person name="Shin H."/>
            <person name="Shumway M."/>
            <person name="Specht C.A."/>
            <person name="Suh B.B."/>
            <person name="Tenney A."/>
            <person name="Utterback T.R."/>
            <person name="Wickes B.L."/>
            <person name="Wortman J.R."/>
            <person name="Wye N.H."/>
            <person name="Kronstad J.W."/>
            <person name="Lodge J.K."/>
            <person name="Heitman J."/>
            <person name="Davis R.W."/>
            <person name="Fraser C.M."/>
            <person name="Hyman R.W."/>
        </authorList>
    </citation>
    <scope>NUCLEOTIDE SEQUENCE [LARGE SCALE GENOMIC DNA]</scope>
    <source>
        <strain>B-3501A</strain>
    </source>
</reference>
<accession>P0CR19</accession>
<accession>Q55UH9</accession>
<accession>Q5KHW6</accession>
<protein>
    <recommendedName>
        <fullName>Ribose-5-phosphate isomerase</fullName>
        <ecNumber>5.3.1.6</ecNumber>
    </recommendedName>
    <alternativeName>
        <fullName>D-ribose-5-phosphate ketol-isomerase</fullName>
    </alternativeName>
    <alternativeName>
        <fullName>Phosphoriboisomerase</fullName>
    </alternativeName>
</protein>
<organism>
    <name type="scientific">Cryptococcus neoformans var. neoformans serotype D (strain B-3501A)</name>
    <name type="common">Filobasidiella neoformans</name>
    <dbReference type="NCBI Taxonomy" id="283643"/>
    <lineage>
        <taxon>Eukaryota</taxon>
        <taxon>Fungi</taxon>
        <taxon>Dikarya</taxon>
        <taxon>Basidiomycota</taxon>
        <taxon>Agaricomycotina</taxon>
        <taxon>Tremellomycetes</taxon>
        <taxon>Tremellales</taxon>
        <taxon>Cryptococcaceae</taxon>
        <taxon>Cryptococcus</taxon>
        <taxon>Cryptococcus neoformans species complex</taxon>
    </lineage>
</organism>